<organism>
    <name type="scientific">Methanopyrus kandleri (strain AV19 / DSM 6324 / JCM 9639 / NBRC 100938)</name>
    <dbReference type="NCBI Taxonomy" id="190192"/>
    <lineage>
        <taxon>Archaea</taxon>
        <taxon>Methanobacteriati</taxon>
        <taxon>Methanobacteriota</taxon>
        <taxon>Methanomada group</taxon>
        <taxon>Methanopyri</taxon>
        <taxon>Methanopyrales</taxon>
        <taxon>Methanopyraceae</taxon>
        <taxon>Methanopyrus</taxon>
    </lineage>
</organism>
<reference key="1">
    <citation type="journal article" date="2002" name="Proc. Natl. Acad. Sci. U.S.A.">
        <title>The complete genome of hyperthermophile Methanopyrus kandleri AV19 and monophyly of archaeal methanogens.</title>
        <authorList>
            <person name="Slesarev A.I."/>
            <person name="Mezhevaya K.V."/>
            <person name="Makarova K.S."/>
            <person name="Polushin N.N."/>
            <person name="Shcherbinina O.V."/>
            <person name="Shakhova V.V."/>
            <person name="Belova G.I."/>
            <person name="Aravind L."/>
            <person name="Natale D.A."/>
            <person name="Rogozin I.B."/>
            <person name="Tatusov R.L."/>
            <person name="Wolf Y.I."/>
            <person name="Stetter K.O."/>
            <person name="Malykh A.G."/>
            <person name="Koonin E.V."/>
            <person name="Kozyavkin S.A."/>
        </authorList>
    </citation>
    <scope>NUCLEOTIDE SEQUENCE [LARGE SCALE GENOMIC DNA]</scope>
    <source>
        <strain>AV19 / DSM 6324 / JCM 9639 / NBRC 100938</strain>
    </source>
</reference>
<accession>Q8TWM7</accession>
<feature type="chain" id="PRO_0000144857" description="Putative HTH-type transcriptional regulatory protein MK1005">
    <location>
        <begin position="1"/>
        <end position="325"/>
    </location>
</feature>
<feature type="domain" description="HTH cro/C1-type" evidence="1">
    <location>
        <begin position="128"/>
        <end position="190"/>
    </location>
</feature>
<feature type="DNA-binding region" description="H-T-H motif" evidence="1">
    <location>
        <begin position="139"/>
        <end position="158"/>
    </location>
</feature>
<evidence type="ECO:0000255" key="1">
    <source>
        <dbReference type="HAMAP-Rule" id="MF_00584"/>
    </source>
</evidence>
<gene>
    <name type="ordered locus">MK1005</name>
</gene>
<proteinExistence type="inferred from homology"/>
<protein>
    <recommendedName>
        <fullName evidence="1">Putative HTH-type transcriptional regulatory protein MK1005</fullName>
    </recommendedName>
</protein>
<sequence length="325" mass="36979">MRAELCADLEEALRAGGHEVVRIERACFDIFVRTRDGRAYIVKVLINADGLRREVAEELRRISHFLEAVPVVVALKRHTGPLEKGVVYHRYEVPVLDPLTFARLVEGEPPKAVADRGGQYVVIRADEVDELDVSRVRRRQLRREGGRITLARAEEADVEGVPVELKTPEHVDTGRDRMTRFERRVAELLERMGAERTGKVRRAPFKLLAKDGETVLARAEEGGDRESIALRDVASATGSMGVIVTRERCKDTYVPTIDIGTLEEIKDLEDLKEYLQERDPEERVRRLVEEAGITSPREIAQRTGIRESVIREFLRRMGITDERKV</sequence>
<name>Y1005_METKA</name>
<keyword id="KW-0238">DNA-binding</keyword>
<keyword id="KW-1185">Reference proteome</keyword>
<keyword id="KW-0804">Transcription</keyword>
<keyword id="KW-0805">Transcription regulation</keyword>
<dbReference type="EMBL" id="AE009439">
    <property type="protein sequence ID" value="AAM02218.1"/>
    <property type="molecule type" value="Genomic_DNA"/>
</dbReference>
<dbReference type="RefSeq" id="WP_011019373.1">
    <property type="nucleotide sequence ID" value="NC_003551.1"/>
</dbReference>
<dbReference type="SMR" id="Q8TWM7"/>
<dbReference type="FunCoup" id="Q8TWM7">
    <property type="interactions" value="5"/>
</dbReference>
<dbReference type="STRING" id="190192.MK1005"/>
<dbReference type="PaxDb" id="190192-MK1005"/>
<dbReference type="EnsemblBacteria" id="AAM02218">
    <property type="protein sequence ID" value="AAM02218"/>
    <property type="gene ID" value="MK1005"/>
</dbReference>
<dbReference type="GeneID" id="1477106"/>
<dbReference type="KEGG" id="mka:MK1005"/>
<dbReference type="HOGENOM" id="CLU_075726_0_0_2"/>
<dbReference type="InParanoid" id="Q8TWM7"/>
<dbReference type="OrthoDB" id="31424at2157"/>
<dbReference type="Proteomes" id="UP000001826">
    <property type="component" value="Chromosome"/>
</dbReference>
<dbReference type="GO" id="GO:0003677">
    <property type="term" value="F:DNA binding"/>
    <property type="evidence" value="ECO:0007669"/>
    <property type="project" value="UniProtKB-KW"/>
</dbReference>
<dbReference type="GO" id="GO:0003700">
    <property type="term" value="F:DNA-binding transcription factor activity"/>
    <property type="evidence" value="ECO:0007669"/>
    <property type="project" value="UniProtKB-UniRule"/>
</dbReference>
<dbReference type="HAMAP" id="MF_00584">
    <property type="entry name" value="HTH_type_cro_C1"/>
    <property type="match status" value="1"/>
</dbReference>
<dbReference type="InterPro" id="IPR020886">
    <property type="entry name" value="Arc_TR_HTH"/>
</dbReference>